<sequence>MKTVTVKDLVIGTGAPKIIVSLMAKDIASVKSEALAYREADFDILEWRVDHYADLSNVESVLAAAKILRETMPEKPLLFTFRSAKEGGEQAISTEAYIALNRAAIDSGLVDMIDLELFTGDDQVKETVAYAHAHDVKVVMSNHDFHKTPEAEEIIARLRKMQSFDADIPKIALMPQSTSDVLTLLAATLEMQEQYADRPIITMSMAKTGVISRLAGEVFGSAATFGAVKKASAPGQISVNDLRTVLTILHQA</sequence>
<evidence type="ECO:0000255" key="1">
    <source>
        <dbReference type="HAMAP-Rule" id="MF_00214"/>
    </source>
</evidence>
<name>AROD_ECO7I</name>
<dbReference type="EC" id="4.2.1.10" evidence="1"/>
<dbReference type="EMBL" id="CU928164">
    <property type="protein sequence ID" value="CAR17499.1"/>
    <property type="molecule type" value="Genomic_DNA"/>
</dbReference>
<dbReference type="RefSeq" id="WP_000860197.1">
    <property type="nucleotide sequence ID" value="NC_011750.1"/>
</dbReference>
<dbReference type="RefSeq" id="YP_002407371.1">
    <property type="nucleotide sequence ID" value="NC_011750.1"/>
</dbReference>
<dbReference type="SMR" id="B7NTU3"/>
<dbReference type="STRING" id="585057.ECIAI39_1365"/>
<dbReference type="KEGG" id="ect:ECIAI39_1365"/>
<dbReference type="PATRIC" id="fig|585057.6.peg.1428"/>
<dbReference type="HOGENOM" id="CLU_064444_0_0_6"/>
<dbReference type="UniPathway" id="UPA00053">
    <property type="reaction ID" value="UER00086"/>
</dbReference>
<dbReference type="Proteomes" id="UP000000749">
    <property type="component" value="Chromosome"/>
</dbReference>
<dbReference type="GO" id="GO:0003855">
    <property type="term" value="F:3-dehydroquinate dehydratase activity"/>
    <property type="evidence" value="ECO:0007669"/>
    <property type="project" value="UniProtKB-UniRule"/>
</dbReference>
<dbReference type="GO" id="GO:0046279">
    <property type="term" value="P:3,4-dihydroxybenzoate biosynthetic process"/>
    <property type="evidence" value="ECO:0007669"/>
    <property type="project" value="TreeGrafter"/>
</dbReference>
<dbReference type="GO" id="GO:0008652">
    <property type="term" value="P:amino acid biosynthetic process"/>
    <property type="evidence" value="ECO:0007669"/>
    <property type="project" value="UniProtKB-KW"/>
</dbReference>
<dbReference type="GO" id="GO:0009073">
    <property type="term" value="P:aromatic amino acid family biosynthetic process"/>
    <property type="evidence" value="ECO:0007669"/>
    <property type="project" value="UniProtKB-KW"/>
</dbReference>
<dbReference type="GO" id="GO:0009423">
    <property type="term" value="P:chorismate biosynthetic process"/>
    <property type="evidence" value="ECO:0007669"/>
    <property type="project" value="UniProtKB-UniRule"/>
</dbReference>
<dbReference type="CDD" id="cd00502">
    <property type="entry name" value="DHQase_I"/>
    <property type="match status" value="1"/>
</dbReference>
<dbReference type="FunFam" id="3.20.20.70:FF:000047">
    <property type="entry name" value="3-dehydroquinate dehydratase"/>
    <property type="match status" value="1"/>
</dbReference>
<dbReference type="Gene3D" id="3.20.20.70">
    <property type="entry name" value="Aldolase class I"/>
    <property type="match status" value="1"/>
</dbReference>
<dbReference type="HAMAP" id="MF_00214">
    <property type="entry name" value="AroD"/>
    <property type="match status" value="1"/>
</dbReference>
<dbReference type="InterPro" id="IPR018508">
    <property type="entry name" value="3-dehydroquinate_DH_AS"/>
</dbReference>
<dbReference type="InterPro" id="IPR013785">
    <property type="entry name" value="Aldolase_TIM"/>
</dbReference>
<dbReference type="InterPro" id="IPR001381">
    <property type="entry name" value="DHquinase_I"/>
</dbReference>
<dbReference type="InterPro" id="IPR050146">
    <property type="entry name" value="Type-I_3-dehydroquinase"/>
</dbReference>
<dbReference type="NCBIfam" id="TIGR01093">
    <property type="entry name" value="aroD"/>
    <property type="match status" value="1"/>
</dbReference>
<dbReference type="PANTHER" id="PTHR43699">
    <property type="entry name" value="3-DEHYDROQUINATE DEHYDRATASE"/>
    <property type="match status" value="1"/>
</dbReference>
<dbReference type="PANTHER" id="PTHR43699:SF1">
    <property type="entry name" value="3-DEHYDROQUINATE DEHYDRATASE"/>
    <property type="match status" value="1"/>
</dbReference>
<dbReference type="Pfam" id="PF01487">
    <property type="entry name" value="DHquinase_I"/>
    <property type="match status" value="1"/>
</dbReference>
<dbReference type="SUPFAM" id="SSF51569">
    <property type="entry name" value="Aldolase"/>
    <property type="match status" value="1"/>
</dbReference>
<dbReference type="PROSITE" id="PS01028">
    <property type="entry name" value="DEHYDROQUINASE_I"/>
    <property type="match status" value="1"/>
</dbReference>
<gene>
    <name evidence="1" type="primary">aroD</name>
    <name type="ordered locus">ECIAI39_1365</name>
</gene>
<reference key="1">
    <citation type="journal article" date="2009" name="PLoS Genet.">
        <title>Organised genome dynamics in the Escherichia coli species results in highly diverse adaptive paths.</title>
        <authorList>
            <person name="Touchon M."/>
            <person name="Hoede C."/>
            <person name="Tenaillon O."/>
            <person name="Barbe V."/>
            <person name="Baeriswyl S."/>
            <person name="Bidet P."/>
            <person name="Bingen E."/>
            <person name="Bonacorsi S."/>
            <person name="Bouchier C."/>
            <person name="Bouvet O."/>
            <person name="Calteau A."/>
            <person name="Chiapello H."/>
            <person name="Clermont O."/>
            <person name="Cruveiller S."/>
            <person name="Danchin A."/>
            <person name="Diard M."/>
            <person name="Dossat C."/>
            <person name="Karoui M.E."/>
            <person name="Frapy E."/>
            <person name="Garry L."/>
            <person name="Ghigo J.M."/>
            <person name="Gilles A.M."/>
            <person name="Johnson J."/>
            <person name="Le Bouguenec C."/>
            <person name="Lescat M."/>
            <person name="Mangenot S."/>
            <person name="Martinez-Jehanne V."/>
            <person name="Matic I."/>
            <person name="Nassif X."/>
            <person name="Oztas S."/>
            <person name="Petit M.A."/>
            <person name="Pichon C."/>
            <person name="Rouy Z."/>
            <person name="Ruf C.S."/>
            <person name="Schneider D."/>
            <person name="Tourret J."/>
            <person name="Vacherie B."/>
            <person name="Vallenet D."/>
            <person name="Medigue C."/>
            <person name="Rocha E.P.C."/>
            <person name="Denamur E."/>
        </authorList>
    </citation>
    <scope>NUCLEOTIDE SEQUENCE [LARGE SCALE GENOMIC DNA]</scope>
    <source>
        <strain>IAI39 / ExPEC</strain>
    </source>
</reference>
<protein>
    <recommendedName>
        <fullName evidence="1">3-dehydroquinate dehydratase</fullName>
        <shortName evidence="1">3-dehydroquinase</shortName>
        <ecNumber evidence="1">4.2.1.10</ecNumber>
    </recommendedName>
    <alternativeName>
        <fullName evidence="1">Type I DHQase</fullName>
    </alternativeName>
    <alternativeName>
        <fullName evidence="1">Type I dehydroquinase</fullName>
        <shortName evidence="1">DHQ1</shortName>
    </alternativeName>
</protein>
<comment type="function">
    <text evidence="1">Involved in the third step of the chorismate pathway, which leads to the biosynthesis of aromatic amino acids. Catalyzes the cis-dehydration of 3-dehydroquinate (DHQ) and introduces the first double bond of the aromatic ring to yield 3-dehydroshikimate.</text>
</comment>
<comment type="catalytic activity">
    <reaction evidence="1">
        <text>3-dehydroquinate = 3-dehydroshikimate + H2O</text>
        <dbReference type="Rhea" id="RHEA:21096"/>
        <dbReference type="ChEBI" id="CHEBI:15377"/>
        <dbReference type="ChEBI" id="CHEBI:16630"/>
        <dbReference type="ChEBI" id="CHEBI:32364"/>
        <dbReference type="EC" id="4.2.1.10"/>
    </reaction>
</comment>
<comment type="pathway">
    <text evidence="1">Metabolic intermediate biosynthesis; chorismate biosynthesis; chorismate from D-erythrose 4-phosphate and phosphoenolpyruvate: step 3/7.</text>
</comment>
<comment type="subunit">
    <text evidence="1">Homodimer.</text>
</comment>
<comment type="similarity">
    <text evidence="1">Belongs to the type-I 3-dehydroquinase family.</text>
</comment>
<organism>
    <name type="scientific">Escherichia coli O7:K1 (strain IAI39 / ExPEC)</name>
    <dbReference type="NCBI Taxonomy" id="585057"/>
    <lineage>
        <taxon>Bacteria</taxon>
        <taxon>Pseudomonadati</taxon>
        <taxon>Pseudomonadota</taxon>
        <taxon>Gammaproteobacteria</taxon>
        <taxon>Enterobacterales</taxon>
        <taxon>Enterobacteriaceae</taxon>
        <taxon>Escherichia</taxon>
    </lineage>
</organism>
<proteinExistence type="inferred from homology"/>
<accession>B7NTU3</accession>
<feature type="chain" id="PRO_1000189571" description="3-dehydroquinate dehydratase">
    <location>
        <begin position="1"/>
        <end position="252"/>
    </location>
</feature>
<feature type="active site" description="Proton donor/acceptor" evidence="1">
    <location>
        <position position="143"/>
    </location>
</feature>
<feature type="active site" description="Schiff-base intermediate with substrate" evidence="1">
    <location>
        <position position="170"/>
    </location>
</feature>
<feature type="binding site" evidence="1">
    <location>
        <position position="21"/>
    </location>
    <ligand>
        <name>3-dehydroquinate</name>
        <dbReference type="ChEBI" id="CHEBI:32364"/>
    </ligand>
</feature>
<feature type="binding site" evidence="1">
    <location>
        <begin position="46"/>
        <end position="48"/>
    </location>
    <ligand>
        <name>3-dehydroquinate</name>
        <dbReference type="ChEBI" id="CHEBI:32364"/>
    </ligand>
</feature>
<feature type="binding site" evidence="1">
    <location>
        <position position="82"/>
    </location>
    <ligand>
        <name>3-dehydroquinate</name>
        <dbReference type="ChEBI" id="CHEBI:32364"/>
    </ligand>
</feature>
<feature type="binding site" evidence="1">
    <location>
        <position position="213"/>
    </location>
    <ligand>
        <name>3-dehydroquinate</name>
        <dbReference type="ChEBI" id="CHEBI:32364"/>
    </ligand>
</feature>
<feature type="binding site" evidence="1">
    <location>
        <position position="232"/>
    </location>
    <ligand>
        <name>3-dehydroquinate</name>
        <dbReference type="ChEBI" id="CHEBI:32364"/>
    </ligand>
</feature>
<feature type="binding site" evidence="1">
    <location>
        <position position="236"/>
    </location>
    <ligand>
        <name>3-dehydroquinate</name>
        <dbReference type="ChEBI" id="CHEBI:32364"/>
    </ligand>
</feature>
<keyword id="KW-0028">Amino-acid biosynthesis</keyword>
<keyword id="KW-0057">Aromatic amino acid biosynthesis</keyword>
<keyword id="KW-0456">Lyase</keyword>
<keyword id="KW-0704">Schiff base</keyword>